<comment type="similarity">
    <text evidence="1">Belongs to the UPF0434 family.</text>
</comment>
<gene>
    <name type="ordered locus">Bcen2424_2546</name>
</gene>
<evidence type="ECO:0000255" key="1">
    <source>
        <dbReference type="HAMAP-Rule" id="MF_01187"/>
    </source>
</evidence>
<accession>A0K9W9</accession>
<protein>
    <recommendedName>
        <fullName evidence="1">UPF0434 protein Bcen2424_2546</fullName>
    </recommendedName>
</protein>
<organism>
    <name type="scientific">Burkholderia cenocepacia (strain HI2424)</name>
    <dbReference type="NCBI Taxonomy" id="331272"/>
    <lineage>
        <taxon>Bacteria</taxon>
        <taxon>Pseudomonadati</taxon>
        <taxon>Pseudomonadota</taxon>
        <taxon>Betaproteobacteria</taxon>
        <taxon>Burkholderiales</taxon>
        <taxon>Burkholderiaceae</taxon>
        <taxon>Burkholderia</taxon>
        <taxon>Burkholderia cepacia complex</taxon>
    </lineage>
</organism>
<feature type="chain" id="PRO_0000291072" description="UPF0434 protein Bcen2424_2546">
    <location>
        <begin position="1"/>
        <end position="64"/>
    </location>
</feature>
<name>Y2546_BURCH</name>
<proteinExistence type="inferred from homology"/>
<reference key="1">
    <citation type="submission" date="2006-08" db="EMBL/GenBank/DDBJ databases">
        <title>Complete sequence of chromosome 1 of Burkholderia cenocepacia HI2424.</title>
        <authorList>
            <person name="Copeland A."/>
            <person name="Lucas S."/>
            <person name="Lapidus A."/>
            <person name="Barry K."/>
            <person name="Detter J.C."/>
            <person name="Glavina del Rio T."/>
            <person name="Hammon N."/>
            <person name="Israni S."/>
            <person name="Pitluck S."/>
            <person name="Chain P."/>
            <person name="Malfatti S."/>
            <person name="Shin M."/>
            <person name="Vergez L."/>
            <person name="Schmutz J."/>
            <person name="Larimer F."/>
            <person name="Land M."/>
            <person name="Hauser L."/>
            <person name="Kyrpides N."/>
            <person name="Kim E."/>
            <person name="LiPuma J.J."/>
            <person name="Gonzalez C.F."/>
            <person name="Konstantinidis K."/>
            <person name="Tiedje J.M."/>
            <person name="Richardson P."/>
        </authorList>
    </citation>
    <scope>NUCLEOTIDE SEQUENCE [LARGE SCALE GENOMIC DNA]</scope>
    <source>
        <strain>HI2424</strain>
    </source>
</reference>
<dbReference type="EMBL" id="CP000458">
    <property type="protein sequence ID" value="ABK09296.1"/>
    <property type="molecule type" value="Genomic_DNA"/>
</dbReference>
<dbReference type="RefSeq" id="WP_006482216.1">
    <property type="nucleotide sequence ID" value="NC_008542.1"/>
</dbReference>
<dbReference type="SMR" id="A0K9W9"/>
<dbReference type="KEGG" id="bch:Bcen2424_2546"/>
<dbReference type="HOGENOM" id="CLU_155659_3_0_4"/>
<dbReference type="GO" id="GO:0005829">
    <property type="term" value="C:cytosol"/>
    <property type="evidence" value="ECO:0007669"/>
    <property type="project" value="TreeGrafter"/>
</dbReference>
<dbReference type="FunFam" id="2.20.25.10:FF:000002">
    <property type="entry name" value="UPF0434 protein YcaR"/>
    <property type="match status" value="1"/>
</dbReference>
<dbReference type="Gene3D" id="2.20.25.10">
    <property type="match status" value="1"/>
</dbReference>
<dbReference type="HAMAP" id="MF_01187">
    <property type="entry name" value="UPF0434"/>
    <property type="match status" value="1"/>
</dbReference>
<dbReference type="InterPro" id="IPR005651">
    <property type="entry name" value="Trm112-like"/>
</dbReference>
<dbReference type="PANTHER" id="PTHR33505:SF4">
    <property type="entry name" value="PROTEIN PREY, MITOCHONDRIAL"/>
    <property type="match status" value="1"/>
</dbReference>
<dbReference type="PANTHER" id="PTHR33505">
    <property type="entry name" value="ZGC:162634"/>
    <property type="match status" value="1"/>
</dbReference>
<dbReference type="Pfam" id="PF03966">
    <property type="entry name" value="Trm112p"/>
    <property type="match status" value="1"/>
</dbReference>
<dbReference type="SUPFAM" id="SSF158997">
    <property type="entry name" value="Trm112p-like"/>
    <property type="match status" value="1"/>
</dbReference>
<sequence length="64" mass="7032">MDARLLEIIVCPICKGPLHYDRAAQELICNADKLAYPIRDGIPVMLVDEARQTVEGTPVDPAGR</sequence>